<evidence type="ECO:0000255" key="1">
    <source>
        <dbReference type="HAMAP-Rule" id="MF_00261"/>
    </source>
</evidence>
<organism>
    <name type="scientific">Pyrococcus abyssi (strain GE5 / Orsay)</name>
    <dbReference type="NCBI Taxonomy" id="272844"/>
    <lineage>
        <taxon>Archaea</taxon>
        <taxon>Methanobacteriati</taxon>
        <taxon>Methanobacteriota</taxon>
        <taxon>Thermococci</taxon>
        <taxon>Thermococcales</taxon>
        <taxon>Thermococcaceae</taxon>
        <taxon>Pyrococcus</taxon>
    </lineage>
</organism>
<feature type="chain" id="PRO_0000149333" description="DNA-directed RNA polymerase subunit Rpo11">
    <location>
        <begin position="1"/>
        <end position="95"/>
    </location>
</feature>
<accession>Q9V2M4</accession>
<accession>G8ZFN2</accession>
<comment type="function">
    <text evidence="1">DNA-dependent RNA polymerase (RNAP) catalyzes the transcription of DNA into RNA using the four ribonucleoside triphosphates as substrates.</text>
</comment>
<comment type="catalytic activity">
    <reaction evidence="1">
        <text>RNA(n) + a ribonucleoside 5'-triphosphate = RNA(n+1) + diphosphate</text>
        <dbReference type="Rhea" id="RHEA:21248"/>
        <dbReference type="Rhea" id="RHEA-COMP:14527"/>
        <dbReference type="Rhea" id="RHEA-COMP:17342"/>
        <dbReference type="ChEBI" id="CHEBI:33019"/>
        <dbReference type="ChEBI" id="CHEBI:61557"/>
        <dbReference type="ChEBI" id="CHEBI:140395"/>
        <dbReference type="EC" id="2.7.7.6"/>
    </reaction>
</comment>
<comment type="subunit">
    <text evidence="1">Part of the RNA polymerase complex.</text>
</comment>
<comment type="subcellular location">
    <subcellularLocation>
        <location evidence="1">Cytoplasm</location>
    </subcellularLocation>
</comment>
<comment type="similarity">
    <text evidence="1">Belongs to the archaeal Rpo11/eukaryotic RPB11/RPC19 RNA polymerase subunit family.</text>
</comment>
<proteinExistence type="inferred from homology"/>
<sequence>MKIEVIKKEQDLLEFYLEGEDHTFANLLTETLRENPHVKFVAYTIEHPILMARKPRFRVVTDGKITPEKALEEAAKKIFDRAKEVLDAWEKAIKG</sequence>
<reference key="1">
    <citation type="journal article" date="2003" name="Mol. Microbiol.">
        <title>An integrated analysis of the genome of the hyperthermophilic archaeon Pyrococcus abyssi.</title>
        <authorList>
            <person name="Cohen G.N."/>
            <person name="Barbe V."/>
            <person name="Flament D."/>
            <person name="Galperin M."/>
            <person name="Heilig R."/>
            <person name="Lecompte O."/>
            <person name="Poch O."/>
            <person name="Prieur D."/>
            <person name="Querellou J."/>
            <person name="Ripp R."/>
            <person name="Thierry J.-C."/>
            <person name="Van der Oost J."/>
            <person name="Weissenbach J."/>
            <person name="Zivanovic Y."/>
            <person name="Forterre P."/>
        </authorList>
    </citation>
    <scope>NUCLEOTIDE SEQUENCE [LARGE SCALE GENOMIC DNA]</scope>
    <source>
        <strain>GE5 / Orsay</strain>
    </source>
</reference>
<reference key="2">
    <citation type="journal article" date="2012" name="Curr. Microbiol.">
        <title>Re-annotation of two hyperthermophilic archaea Pyrococcus abyssi GE5 and Pyrococcus furiosus DSM 3638.</title>
        <authorList>
            <person name="Gao J."/>
            <person name="Wang J."/>
        </authorList>
    </citation>
    <scope>GENOME REANNOTATION</scope>
    <source>
        <strain>GE5 / Orsay</strain>
    </source>
</reference>
<name>RPO11_PYRAB</name>
<dbReference type="EC" id="2.7.7.6" evidence="1"/>
<dbReference type="EMBL" id="AJ248283">
    <property type="protein sequence ID" value="CAB48974.1"/>
    <property type="molecule type" value="Genomic_DNA"/>
</dbReference>
<dbReference type="EMBL" id="HE613800">
    <property type="protein sequence ID" value="CCE69423.1"/>
    <property type="molecule type" value="Genomic_DNA"/>
</dbReference>
<dbReference type="PIR" id="G75190">
    <property type="entry name" value="G75190"/>
</dbReference>
<dbReference type="RefSeq" id="WP_010867175.1">
    <property type="nucleotide sequence ID" value="NC_000868.1"/>
</dbReference>
<dbReference type="SMR" id="Q9V2M4"/>
<dbReference type="STRING" id="272844.PAB2316"/>
<dbReference type="KEGG" id="pab:PAB2316"/>
<dbReference type="PATRIC" id="fig|272844.11.peg.58"/>
<dbReference type="eggNOG" id="arCOG04111">
    <property type="taxonomic scope" value="Archaea"/>
</dbReference>
<dbReference type="HOGENOM" id="CLU_090381_5_0_2"/>
<dbReference type="OrthoDB" id="24205at2157"/>
<dbReference type="PhylomeDB" id="Q9V2M4"/>
<dbReference type="Proteomes" id="UP000000810">
    <property type="component" value="Chromosome"/>
</dbReference>
<dbReference type="Proteomes" id="UP000009139">
    <property type="component" value="Chromosome"/>
</dbReference>
<dbReference type="GO" id="GO:0005737">
    <property type="term" value="C:cytoplasm"/>
    <property type="evidence" value="ECO:0007669"/>
    <property type="project" value="UniProtKB-SubCell"/>
</dbReference>
<dbReference type="GO" id="GO:0000428">
    <property type="term" value="C:DNA-directed RNA polymerase complex"/>
    <property type="evidence" value="ECO:0007669"/>
    <property type="project" value="UniProtKB-KW"/>
</dbReference>
<dbReference type="GO" id="GO:0003677">
    <property type="term" value="F:DNA binding"/>
    <property type="evidence" value="ECO:0007669"/>
    <property type="project" value="InterPro"/>
</dbReference>
<dbReference type="GO" id="GO:0003899">
    <property type="term" value="F:DNA-directed RNA polymerase activity"/>
    <property type="evidence" value="ECO:0007669"/>
    <property type="project" value="UniProtKB-UniRule"/>
</dbReference>
<dbReference type="GO" id="GO:0046983">
    <property type="term" value="F:protein dimerization activity"/>
    <property type="evidence" value="ECO:0007669"/>
    <property type="project" value="InterPro"/>
</dbReference>
<dbReference type="GO" id="GO:0006351">
    <property type="term" value="P:DNA-templated transcription"/>
    <property type="evidence" value="ECO:0007669"/>
    <property type="project" value="UniProtKB-UniRule"/>
</dbReference>
<dbReference type="CDD" id="cd06927">
    <property type="entry name" value="RNAP_L"/>
    <property type="match status" value="1"/>
</dbReference>
<dbReference type="Gene3D" id="3.30.1360.10">
    <property type="entry name" value="RNA polymerase, RBP11-like subunit"/>
    <property type="match status" value="1"/>
</dbReference>
<dbReference type="HAMAP" id="MF_00261">
    <property type="entry name" value="RNApol_arch_Rpo11"/>
    <property type="match status" value="1"/>
</dbReference>
<dbReference type="InterPro" id="IPR036603">
    <property type="entry name" value="RBP11-like"/>
</dbReference>
<dbReference type="InterPro" id="IPR009025">
    <property type="entry name" value="RBP11-like_dimer"/>
</dbReference>
<dbReference type="InterPro" id="IPR008193">
    <property type="entry name" value="RNA_pol_Rpb11_13-16kDa_CS"/>
</dbReference>
<dbReference type="InterPro" id="IPR022905">
    <property type="entry name" value="Rpo11-like"/>
</dbReference>
<dbReference type="NCBIfam" id="NF002235">
    <property type="entry name" value="PRK01146.1-3"/>
    <property type="match status" value="1"/>
</dbReference>
<dbReference type="PANTHER" id="PTHR13946">
    <property type="entry name" value="DNA-DIRECTED RNA POLYMERASE I,II,III"/>
    <property type="match status" value="1"/>
</dbReference>
<dbReference type="PANTHER" id="PTHR13946:SF28">
    <property type="entry name" value="DNA-DIRECTED RNA POLYMERASES I AND III SUBUNIT RPAC2"/>
    <property type="match status" value="1"/>
</dbReference>
<dbReference type="Pfam" id="PF13656">
    <property type="entry name" value="RNA_pol_L_2"/>
    <property type="match status" value="1"/>
</dbReference>
<dbReference type="SUPFAM" id="SSF55257">
    <property type="entry name" value="RBP11-like subunits of RNA polymerase"/>
    <property type="match status" value="1"/>
</dbReference>
<dbReference type="PROSITE" id="PS01154">
    <property type="entry name" value="RNA_POL_L_13KD"/>
    <property type="match status" value="1"/>
</dbReference>
<protein>
    <recommendedName>
        <fullName evidence="1">DNA-directed RNA polymerase subunit Rpo11</fullName>
        <ecNumber evidence="1">2.7.7.6</ecNumber>
    </recommendedName>
    <alternativeName>
        <fullName evidence="1">DNA-directed RNA polymerase subunit L</fullName>
    </alternativeName>
</protein>
<keyword id="KW-0963">Cytoplasm</keyword>
<keyword id="KW-0240">DNA-directed RNA polymerase</keyword>
<keyword id="KW-0548">Nucleotidyltransferase</keyword>
<keyword id="KW-0804">Transcription</keyword>
<keyword id="KW-0808">Transferase</keyword>
<gene>
    <name evidence="1" type="primary">rpo11</name>
    <name evidence="1" type="synonym">rpoL</name>
    <name type="ordered locus">PYRAB00510</name>
    <name type="ORF">PAB2316</name>
</gene>